<accession>A6YIH8</accession>
<keyword id="KW-0349">Heme</keyword>
<keyword id="KW-0408">Iron</keyword>
<keyword id="KW-0472">Membrane</keyword>
<keyword id="KW-0479">Metal-binding</keyword>
<keyword id="KW-0503">Monooxygenase</keyword>
<keyword id="KW-0560">Oxidoreductase</keyword>
<keyword id="KW-0812">Transmembrane</keyword>
<keyword id="KW-1133">Transmembrane helix</keyword>
<name>C7D55_HYOMU</name>
<comment type="function">
    <text>Involved in the biosynthesis of solavetivone, a potent antifungal phytoalexin. Catalyzes the successive and independent hydroxylations of premnaspirodiene and solavetivol. The first hydroxylation step is 3-fold more efficient than the second hydroxylation reaction.</text>
</comment>
<comment type="catalytic activity">
    <reaction evidence="3">
        <text>(-)-vetispiradiene + 2 reduced [NADPH--hemoprotein reductase] + 2 O2 = solavetivone + 2 oxidized [NADPH--hemoprotein reductase] + 3 H2O + 2 H(+)</text>
        <dbReference type="Rhea" id="RHEA:32455"/>
        <dbReference type="Rhea" id="RHEA-COMP:11964"/>
        <dbReference type="Rhea" id="RHEA-COMP:11965"/>
        <dbReference type="ChEBI" id="CHEBI:9192"/>
        <dbReference type="ChEBI" id="CHEBI:15377"/>
        <dbReference type="ChEBI" id="CHEBI:15378"/>
        <dbReference type="ChEBI" id="CHEBI:15379"/>
        <dbReference type="ChEBI" id="CHEBI:46971"/>
        <dbReference type="ChEBI" id="CHEBI:57618"/>
        <dbReference type="ChEBI" id="CHEBI:58210"/>
        <dbReference type="EC" id="1.14.14.151"/>
    </reaction>
</comment>
<comment type="cofactor">
    <cofactor evidence="1">
        <name>heme</name>
        <dbReference type="ChEBI" id="CHEBI:30413"/>
    </cofactor>
</comment>
<comment type="biophysicochemical properties">
    <kinetics>
        <KM evidence="3">14 uM for premnaspirodiene</KM>
        <KM evidence="3">1.2 uM for solavetivol</KM>
        <KM evidence="3">11.5 uM for valencene</KM>
        <KM evidence="3">3.3 uM for 5-epi-aristolochene</KM>
        <KM evidence="3">7.8 uM for epi-eremophilene</KM>
        <KM evidence="3">26.5 uM for cedr-8-ene</KM>
    </kinetics>
</comment>
<comment type="subcellular location">
    <subcellularLocation>
        <location evidence="4">Membrane</location>
        <topology evidence="4">Single-pass membrane protein</topology>
    </subcellularLocation>
</comment>
<comment type="similarity">
    <text evidence="4">Belongs to the cytochrome P450 family.</text>
</comment>
<proteinExistence type="evidence at protein level"/>
<feature type="chain" id="PRO_0000409471" description="Premnaspirodiene oxygenase">
    <location>
        <begin position="1"/>
        <end position="502"/>
    </location>
</feature>
<feature type="transmembrane region" description="Helical" evidence="2">
    <location>
        <begin position="2"/>
        <end position="22"/>
    </location>
</feature>
<feature type="binding site" description="axial binding residue" evidence="1">
    <location>
        <position position="440"/>
    </location>
    <ligand>
        <name>heme</name>
        <dbReference type="ChEBI" id="CHEBI:30413"/>
    </ligand>
    <ligandPart>
        <name>Fe</name>
        <dbReference type="ChEBI" id="CHEBI:18248"/>
    </ligandPart>
</feature>
<feature type="mutagenesis site" description="Decreases catalytic activity. Strongly increased catalytic activity; when associated with I-482 and I-484." evidence="3">
    <original>V</original>
    <variation>S</variation>
    <location>
        <position position="366"/>
    </location>
</feature>
<feature type="mutagenesis site" description="Increases catalytic activity. Strongly increased catalytic activity; when associated with I-484 or I-482 and I-484." evidence="3">
    <original>V</original>
    <variation>S</variation>
    <location>
        <position position="480"/>
    </location>
</feature>
<feature type="mutagenesis site" description="Increases catalytic activity. Strongly increased catalytic activity; when associated with I-484 or S-366 and I-484 or S-480 and I-484." evidence="3">
    <original>V</original>
    <variation>I</variation>
    <location>
        <position position="482"/>
    </location>
</feature>
<feature type="mutagenesis site" description="Decreases catalytic activity. Strongly increased catalytic activity; when associated with S-480 or I-482 or S-366 and I-482 or S-480 and I-482." evidence="3">
    <original>A</original>
    <variation>I</variation>
    <location>
        <position position="484"/>
    </location>
</feature>
<evidence type="ECO:0000250" key="1"/>
<evidence type="ECO:0000255" key="2"/>
<evidence type="ECO:0000269" key="3">
    <source>
    </source>
</evidence>
<evidence type="ECO:0000305" key="4"/>
<gene>
    <name type="primary">CYP71D55</name>
</gene>
<dbReference type="EC" id="1.14.14.151" evidence="3"/>
<dbReference type="EMBL" id="EF569601">
    <property type="protein sequence ID" value="ABS00393.1"/>
    <property type="molecule type" value="mRNA"/>
</dbReference>
<dbReference type="SMR" id="A6YIH8"/>
<dbReference type="KEGG" id="ag:ABS00393"/>
<dbReference type="BioCyc" id="MetaCyc:MONOMER-16034"/>
<dbReference type="BRENDA" id="1.14.13.121">
    <property type="organism ID" value="2739"/>
</dbReference>
<dbReference type="BRENDA" id="1.14.14.151">
    <property type="organism ID" value="2739"/>
</dbReference>
<dbReference type="SABIO-RK" id="A6YIH8"/>
<dbReference type="GO" id="GO:0016020">
    <property type="term" value="C:membrane"/>
    <property type="evidence" value="ECO:0007669"/>
    <property type="project" value="UniProtKB-SubCell"/>
</dbReference>
<dbReference type="GO" id="GO:0020037">
    <property type="term" value="F:heme binding"/>
    <property type="evidence" value="ECO:0007669"/>
    <property type="project" value="InterPro"/>
</dbReference>
<dbReference type="GO" id="GO:0005506">
    <property type="term" value="F:iron ion binding"/>
    <property type="evidence" value="ECO:0007669"/>
    <property type="project" value="InterPro"/>
</dbReference>
<dbReference type="GO" id="GO:0004497">
    <property type="term" value="F:monooxygenase activity"/>
    <property type="evidence" value="ECO:0007669"/>
    <property type="project" value="UniProtKB-KW"/>
</dbReference>
<dbReference type="GO" id="GO:0016705">
    <property type="term" value="F:oxidoreductase activity, acting on paired donors, with incorporation or reduction of molecular oxygen"/>
    <property type="evidence" value="ECO:0007669"/>
    <property type="project" value="InterPro"/>
</dbReference>
<dbReference type="CDD" id="cd11072">
    <property type="entry name" value="CYP71-like"/>
    <property type="match status" value="1"/>
</dbReference>
<dbReference type="FunFam" id="1.10.630.10:FF:000043">
    <property type="entry name" value="Cytochrome P450 99A2"/>
    <property type="match status" value="1"/>
</dbReference>
<dbReference type="Gene3D" id="1.10.630.10">
    <property type="entry name" value="Cytochrome P450"/>
    <property type="match status" value="1"/>
</dbReference>
<dbReference type="InterPro" id="IPR052306">
    <property type="entry name" value="CYP450_71D"/>
</dbReference>
<dbReference type="InterPro" id="IPR001128">
    <property type="entry name" value="Cyt_P450"/>
</dbReference>
<dbReference type="InterPro" id="IPR017972">
    <property type="entry name" value="Cyt_P450_CS"/>
</dbReference>
<dbReference type="InterPro" id="IPR002401">
    <property type="entry name" value="Cyt_P450_E_grp-I"/>
</dbReference>
<dbReference type="InterPro" id="IPR036396">
    <property type="entry name" value="Cyt_P450_sf"/>
</dbReference>
<dbReference type="PANTHER" id="PTHR47953:SF17">
    <property type="entry name" value="CYTOCHROME P450"/>
    <property type="match status" value="1"/>
</dbReference>
<dbReference type="PANTHER" id="PTHR47953">
    <property type="entry name" value="OS08G0105600 PROTEIN"/>
    <property type="match status" value="1"/>
</dbReference>
<dbReference type="Pfam" id="PF00067">
    <property type="entry name" value="p450"/>
    <property type="match status" value="1"/>
</dbReference>
<dbReference type="PRINTS" id="PR00463">
    <property type="entry name" value="EP450I"/>
</dbReference>
<dbReference type="PRINTS" id="PR00385">
    <property type="entry name" value="P450"/>
</dbReference>
<dbReference type="SUPFAM" id="SSF48264">
    <property type="entry name" value="Cytochrome P450"/>
    <property type="match status" value="1"/>
</dbReference>
<dbReference type="PROSITE" id="PS00086">
    <property type="entry name" value="CYTOCHROME_P450"/>
    <property type="match status" value="1"/>
</dbReference>
<reference key="1">
    <citation type="journal article" date="2007" name="J. Biol. Chem.">
        <title>Functional characterization of premnaspirodiene oxygenase, a cytochrome P450 catalyzing regio- and stereo-specific hydroxylations of diverse sesquiterpene substrates.</title>
        <authorList>
            <person name="Takahashi S."/>
            <person name="Yeo Y.S."/>
            <person name="Zhao Y."/>
            <person name="O'Maille P.E."/>
            <person name="Greenhagen B.T."/>
            <person name="Noel J.P."/>
            <person name="Coates R.M."/>
            <person name="Chappell J."/>
        </authorList>
    </citation>
    <scope>NUCLEOTIDE SEQUENCE [MRNA]</scope>
    <scope>CATALYTIC ACTIVITY</scope>
    <scope>BIOPHYSICOCHEMICAL PROPERTIES</scope>
    <scope>MUTAGENESIS OF VAL-366; VAL-480; VAL-482 AND ALA-484</scope>
</reference>
<sequence>MQFFSLVSIFLFLSFLFLLRKWKNSNSQSKKLPPGPWKLPLLGSMLHMVGGLPHHVLRDLAKKYGPLMHLQLGEVSAVVVTSPDMAKEVLKTHDIAFASRPKLLAPEIVCYNRSDIAFCPYGDYWRQMRKICVLEVLSAKNVRSFSSIRRDEVLRLVNFVRSSTSEPVNFTERLFLFTSSMTCRSAFGKVFKEQETFIQLIKEVIGLAGGFDVADIFPSLKFLHVLTGMEGKIMKAHHKVDAIVEDVINEHKKNLAMGKTNGALGGEDLIDVLLRLMNDGGLQFPITNDNIKAIIFDMFAAGTETSSSTLVWAMVQMMRNPTILAKAQAEVREAFKGKETFDENDVEELKYLKLVIKETLRLHPPVPLLVPRECREETEINGYTIPVKTKVMVNVWALGRDPKYWDDADNFKPERFEQCSVDFIGNNFEYLPFGGGRRICPGISFGLANVYLPLAQLLYHFDWKLPTGMEPKDLDLTELVGVTAARKSDLMLVATPYQPSRE</sequence>
<protein>
    <recommendedName>
        <fullName>Premnaspirodiene oxygenase</fullName>
        <shortName>HPO</shortName>
        <ecNumber evidence="3">1.14.14.151</ecNumber>
    </recommendedName>
    <alternativeName>
        <fullName>Cytochrome P450 71D55</fullName>
    </alternativeName>
</protein>
<organism>
    <name type="scientific">Hyoscyamus muticus</name>
    <name type="common">Egyptian henbane</name>
    <dbReference type="NCBI Taxonomy" id="35626"/>
    <lineage>
        <taxon>Eukaryota</taxon>
        <taxon>Viridiplantae</taxon>
        <taxon>Streptophyta</taxon>
        <taxon>Embryophyta</taxon>
        <taxon>Tracheophyta</taxon>
        <taxon>Spermatophyta</taxon>
        <taxon>Magnoliopsida</taxon>
        <taxon>eudicotyledons</taxon>
        <taxon>Gunneridae</taxon>
        <taxon>Pentapetalae</taxon>
        <taxon>asterids</taxon>
        <taxon>lamiids</taxon>
        <taxon>Solanales</taxon>
        <taxon>Solanaceae</taxon>
        <taxon>Solanoideae</taxon>
        <taxon>Hyoscyameae</taxon>
        <taxon>Hyoscyamus</taxon>
    </lineage>
</organism>